<reference key="1">
    <citation type="journal article" date="2009" name="Nature">
        <title>Evolution of pathogenicity and sexual reproduction in eight Candida genomes.</title>
        <authorList>
            <person name="Butler G."/>
            <person name="Rasmussen M.D."/>
            <person name="Lin M.F."/>
            <person name="Santos M.A.S."/>
            <person name="Sakthikumar S."/>
            <person name="Munro C.A."/>
            <person name="Rheinbay E."/>
            <person name="Grabherr M."/>
            <person name="Forche A."/>
            <person name="Reedy J.L."/>
            <person name="Agrafioti I."/>
            <person name="Arnaud M.B."/>
            <person name="Bates S."/>
            <person name="Brown A.J.P."/>
            <person name="Brunke S."/>
            <person name="Costanzo M.C."/>
            <person name="Fitzpatrick D.A."/>
            <person name="de Groot P.W.J."/>
            <person name="Harris D."/>
            <person name="Hoyer L.L."/>
            <person name="Hube B."/>
            <person name="Klis F.M."/>
            <person name="Kodira C."/>
            <person name="Lennard N."/>
            <person name="Logue M.E."/>
            <person name="Martin R."/>
            <person name="Neiman A.M."/>
            <person name="Nikolaou E."/>
            <person name="Quail M.A."/>
            <person name="Quinn J."/>
            <person name="Santos M.C."/>
            <person name="Schmitzberger F.F."/>
            <person name="Sherlock G."/>
            <person name="Shah P."/>
            <person name="Silverstein K.A.T."/>
            <person name="Skrzypek M.S."/>
            <person name="Soll D."/>
            <person name="Staggs R."/>
            <person name="Stansfield I."/>
            <person name="Stumpf M.P.H."/>
            <person name="Sudbery P.E."/>
            <person name="Srikantha T."/>
            <person name="Zeng Q."/>
            <person name="Berman J."/>
            <person name="Berriman M."/>
            <person name="Heitman J."/>
            <person name="Gow N.A.R."/>
            <person name="Lorenz M.C."/>
            <person name="Birren B.W."/>
            <person name="Kellis M."/>
            <person name="Cuomo C.A."/>
        </authorList>
    </citation>
    <scope>NUCLEOTIDE SEQUENCE [LARGE SCALE GENOMIC DNA]</scope>
    <source>
        <strain>WO-1</strain>
    </source>
</reference>
<sequence length="561" mass="63499">MKIKQENITNTTSINTSNVNDKPKPKRKKTSRACNHCHKAHMTCDSGRPCKRCIQRGLDSTCEDAPRKRKKYLQDVPNSSLMSNHSMNSSDNLDSNGVSPMQPTLSQPMPPVQESSLPTNIPNQSQVPSQSPNTASQKQLSYSPPLASTYSPNHKTYSATLFQHSATSPELMQTVPEYFPELYNQHYQPSANPNQKRRTNFLSTAADLEYSTLSNILQENFGHHTTSNEGTPNSHNFSPALSPHNMPTNNTNAPSTSTQLLTNDQQRQATSFNNHTKHNTPSPLNTSHTKLYEDARYPKCDETINQYFLGDTDSGKMVVFPDVLTAIENMKNNDPAVYLERNSKSALSFVMSIQHENNSNGGKEDQLFKEPEEIYEKVKKPFSYTPGYHSLIAYLRKRFTKPMLVKMAESMATYRPSFIACTNSLKEHDLIFMEQCFQRTLLTYDNYIKISGTPTIVWRRTGEVAYVGNEFCVLTGWPKEELIGKDKRKFIVELLDDKSVLQYFQVFSRIAFGDFLGATMTECTLLTPNPNVKIRTGCMWTLKRDVFGIPMMIVGNFLPIL</sequence>
<protein>
    <recommendedName>
        <fullName>Transcription activator of gluconeogenesis ERT1</fullName>
    </recommendedName>
</protein>
<feature type="chain" id="PRO_0000406457" description="Transcription activator of gluconeogenesis ERT1">
    <location>
        <begin position="1"/>
        <end position="561"/>
    </location>
</feature>
<feature type="domain" description="PAS" evidence="2">
    <location>
        <begin position="440"/>
        <end position="514"/>
    </location>
</feature>
<feature type="DNA-binding region" description="Zn(2)-C6 fungal-type" evidence="3">
    <location>
        <begin position="34"/>
        <end position="62"/>
    </location>
</feature>
<feature type="region of interest" description="Disordered" evidence="4">
    <location>
        <begin position="1"/>
        <end position="32"/>
    </location>
</feature>
<feature type="region of interest" description="Disordered" evidence="4">
    <location>
        <begin position="61"/>
        <end position="151"/>
    </location>
</feature>
<feature type="region of interest" description="Disordered" evidence="4">
    <location>
        <begin position="222"/>
        <end position="258"/>
    </location>
</feature>
<feature type="compositionally biased region" description="Low complexity" evidence="4">
    <location>
        <begin position="7"/>
        <end position="18"/>
    </location>
</feature>
<feature type="compositionally biased region" description="Low complexity" evidence="4">
    <location>
        <begin position="78"/>
        <end position="96"/>
    </location>
</feature>
<feature type="compositionally biased region" description="Polar residues" evidence="4">
    <location>
        <begin position="97"/>
        <end position="151"/>
    </location>
</feature>
<feature type="compositionally biased region" description="Polar residues" evidence="4">
    <location>
        <begin position="222"/>
        <end position="239"/>
    </location>
</feature>
<feature type="compositionally biased region" description="Low complexity" evidence="4">
    <location>
        <begin position="245"/>
        <end position="258"/>
    </location>
</feature>
<comment type="function">
    <text evidence="1">Transcription factor which regulates nonfermentable carbon utilization. Activator of gluconeogenetic genes (By similarity).</text>
</comment>
<comment type="subcellular location">
    <subcellularLocation>
        <location evidence="3">Nucleus</location>
    </subcellularLocation>
</comment>
<comment type="similarity">
    <text evidence="5">Belongs to the ERT1/acuK family.</text>
</comment>
<dbReference type="EMBL" id="CM000309">
    <property type="protein sequence ID" value="EEQ43404.1"/>
    <property type="molecule type" value="Genomic_DNA"/>
</dbReference>
<dbReference type="SMR" id="C4YLC3"/>
<dbReference type="PaxDb" id="5476-C4YLC3"/>
<dbReference type="VEuPathDB" id="FungiDB:CAWG_01641"/>
<dbReference type="HOGENOM" id="CLU_010748_2_3_1"/>
<dbReference type="OMA" id="CVWTLKR"/>
<dbReference type="OrthoDB" id="6660at766764"/>
<dbReference type="Proteomes" id="UP000001429">
    <property type="component" value="Chromosome R"/>
</dbReference>
<dbReference type="GO" id="GO:0005634">
    <property type="term" value="C:nucleus"/>
    <property type="evidence" value="ECO:0007669"/>
    <property type="project" value="UniProtKB-SubCell"/>
</dbReference>
<dbReference type="GO" id="GO:0000981">
    <property type="term" value="F:DNA-binding transcription factor activity, RNA polymerase II-specific"/>
    <property type="evidence" value="ECO:0007669"/>
    <property type="project" value="InterPro"/>
</dbReference>
<dbReference type="GO" id="GO:0000977">
    <property type="term" value="F:RNA polymerase II transcription regulatory region sequence-specific DNA binding"/>
    <property type="evidence" value="ECO:0007669"/>
    <property type="project" value="TreeGrafter"/>
</dbReference>
<dbReference type="GO" id="GO:0008270">
    <property type="term" value="F:zinc ion binding"/>
    <property type="evidence" value="ECO:0007669"/>
    <property type="project" value="InterPro"/>
</dbReference>
<dbReference type="GO" id="GO:0009267">
    <property type="term" value="P:cellular response to starvation"/>
    <property type="evidence" value="ECO:0007669"/>
    <property type="project" value="TreeGrafter"/>
</dbReference>
<dbReference type="GO" id="GO:0006094">
    <property type="term" value="P:gluconeogenesis"/>
    <property type="evidence" value="ECO:0007669"/>
    <property type="project" value="UniProtKB-KW"/>
</dbReference>
<dbReference type="CDD" id="cd00067">
    <property type="entry name" value="GAL4"/>
    <property type="match status" value="1"/>
</dbReference>
<dbReference type="CDD" id="cd00130">
    <property type="entry name" value="PAS"/>
    <property type="match status" value="1"/>
</dbReference>
<dbReference type="Gene3D" id="4.10.240.10">
    <property type="entry name" value="Zn(2)-C6 fungal-type DNA-binding domain"/>
    <property type="match status" value="1"/>
</dbReference>
<dbReference type="InterPro" id="IPR050335">
    <property type="entry name" value="ERT1_acuK_gluconeogen_tf"/>
</dbReference>
<dbReference type="InterPro" id="IPR000014">
    <property type="entry name" value="PAS"/>
</dbReference>
<dbReference type="InterPro" id="IPR035965">
    <property type="entry name" value="PAS-like_dom_sf"/>
</dbReference>
<dbReference type="InterPro" id="IPR056751">
    <property type="entry name" value="PAS_13"/>
</dbReference>
<dbReference type="InterPro" id="IPR036864">
    <property type="entry name" value="Zn2-C6_fun-type_DNA-bd_sf"/>
</dbReference>
<dbReference type="InterPro" id="IPR001138">
    <property type="entry name" value="Zn2Cys6_DnaBD"/>
</dbReference>
<dbReference type="PANTHER" id="PTHR47659:SF1">
    <property type="entry name" value="TRANSCRIPTION ACTIVATOR OF GLUCONEOGENESIS ERT1"/>
    <property type="match status" value="1"/>
</dbReference>
<dbReference type="PANTHER" id="PTHR47659">
    <property type="entry name" value="ZN(II)2CYS6 TRANSCRIPTION FACTOR (EUROFUNG)-RELATED"/>
    <property type="match status" value="1"/>
</dbReference>
<dbReference type="Pfam" id="PF24990">
    <property type="entry name" value="PAS_13"/>
    <property type="match status" value="2"/>
</dbReference>
<dbReference type="Pfam" id="PF00172">
    <property type="entry name" value="Zn_clus"/>
    <property type="match status" value="1"/>
</dbReference>
<dbReference type="SMART" id="SM00066">
    <property type="entry name" value="GAL4"/>
    <property type="match status" value="1"/>
</dbReference>
<dbReference type="SUPFAM" id="SSF55785">
    <property type="entry name" value="PYP-like sensor domain (PAS domain)"/>
    <property type="match status" value="1"/>
</dbReference>
<dbReference type="SUPFAM" id="SSF57701">
    <property type="entry name" value="Zn2/Cys6 DNA-binding domain"/>
    <property type="match status" value="1"/>
</dbReference>
<dbReference type="PROSITE" id="PS50112">
    <property type="entry name" value="PAS"/>
    <property type="match status" value="1"/>
</dbReference>
<dbReference type="PROSITE" id="PS00463">
    <property type="entry name" value="ZN2_CY6_FUNGAL_1"/>
    <property type="match status" value="1"/>
</dbReference>
<dbReference type="PROSITE" id="PS50048">
    <property type="entry name" value="ZN2_CY6_FUNGAL_2"/>
    <property type="match status" value="1"/>
</dbReference>
<evidence type="ECO:0000250" key="1"/>
<evidence type="ECO:0000255" key="2">
    <source>
        <dbReference type="PROSITE-ProRule" id="PRU00140"/>
    </source>
</evidence>
<evidence type="ECO:0000255" key="3">
    <source>
        <dbReference type="PROSITE-ProRule" id="PRU00227"/>
    </source>
</evidence>
<evidence type="ECO:0000256" key="4">
    <source>
        <dbReference type="SAM" id="MobiDB-lite"/>
    </source>
</evidence>
<evidence type="ECO:0000305" key="5"/>
<keyword id="KW-0010">Activator</keyword>
<keyword id="KW-0238">DNA-binding</keyword>
<keyword id="KW-0312">Gluconeogenesis</keyword>
<keyword id="KW-0479">Metal-binding</keyword>
<keyword id="KW-0539">Nucleus</keyword>
<keyword id="KW-0804">Transcription</keyword>
<keyword id="KW-0805">Transcription regulation</keyword>
<keyword id="KW-0862">Zinc</keyword>
<accession>C4YLC3</accession>
<name>ERT1_CANAW</name>
<gene>
    <name type="primary">ERT1</name>
    <name type="ORF">CAWG_01641</name>
</gene>
<proteinExistence type="inferred from homology"/>
<organism>
    <name type="scientific">Candida albicans (strain WO-1)</name>
    <name type="common">Yeast</name>
    <dbReference type="NCBI Taxonomy" id="294748"/>
    <lineage>
        <taxon>Eukaryota</taxon>
        <taxon>Fungi</taxon>
        <taxon>Dikarya</taxon>
        <taxon>Ascomycota</taxon>
        <taxon>Saccharomycotina</taxon>
        <taxon>Pichiomycetes</taxon>
        <taxon>Debaryomycetaceae</taxon>
        <taxon>Candida/Lodderomyces clade</taxon>
        <taxon>Candida</taxon>
    </lineage>
</organism>